<protein>
    <recommendedName>
        <fullName evidence="1">Large ribosomal subunit protein eL8A</fullName>
    </recommendedName>
    <alternativeName>
        <fullName>60S ribosomal protein L8-A</fullName>
    </alternativeName>
</protein>
<gene>
    <name evidence="1" type="primary">RPL82</name>
    <name type="ordered locus">orf19.2311</name>
    <name type="ORF">CAALFM_C111030WA</name>
</gene>
<reference key="1">
    <citation type="journal article" date="2004" name="Proc. Natl. Acad. Sci. U.S.A.">
        <title>The diploid genome sequence of Candida albicans.</title>
        <authorList>
            <person name="Jones T."/>
            <person name="Federspiel N.A."/>
            <person name="Chibana H."/>
            <person name="Dungan J."/>
            <person name="Kalman S."/>
            <person name="Magee B.B."/>
            <person name="Newport G."/>
            <person name="Thorstenson Y.R."/>
            <person name="Agabian N."/>
            <person name="Magee P.T."/>
            <person name="Davis R.W."/>
            <person name="Scherer S."/>
        </authorList>
    </citation>
    <scope>NUCLEOTIDE SEQUENCE [LARGE SCALE GENOMIC DNA]</scope>
    <source>
        <strain>SC5314 / ATCC MYA-2876</strain>
    </source>
</reference>
<reference key="2">
    <citation type="journal article" date="2007" name="Genome Biol.">
        <title>Assembly of the Candida albicans genome into sixteen supercontigs aligned on the eight chromosomes.</title>
        <authorList>
            <person name="van het Hoog M."/>
            <person name="Rast T.J."/>
            <person name="Martchenko M."/>
            <person name="Grindle S."/>
            <person name="Dignard D."/>
            <person name="Hogues H."/>
            <person name="Cuomo C."/>
            <person name="Berriman M."/>
            <person name="Scherer S."/>
            <person name="Magee B.B."/>
            <person name="Whiteway M."/>
            <person name="Chibana H."/>
            <person name="Nantel A."/>
            <person name="Magee P.T."/>
        </authorList>
    </citation>
    <scope>GENOME REANNOTATION</scope>
    <source>
        <strain>SC5314 / ATCC MYA-2876</strain>
    </source>
</reference>
<reference key="3">
    <citation type="journal article" date="2013" name="Genome Biol.">
        <title>Assembly of a phased diploid Candida albicans genome facilitates allele-specific measurements and provides a simple model for repeat and indel structure.</title>
        <authorList>
            <person name="Muzzey D."/>
            <person name="Schwartz K."/>
            <person name="Weissman J.S."/>
            <person name="Sherlock G."/>
        </authorList>
    </citation>
    <scope>NUCLEOTIDE SEQUENCE [LARGE SCALE GENOMIC DNA]</scope>
    <scope>GENOME REANNOTATION</scope>
    <source>
        <strain>SC5314 / ATCC MYA-2876</strain>
    </source>
</reference>
<dbReference type="EMBL" id="CP017623">
    <property type="protein sequence ID" value="AOW26729.1"/>
    <property type="molecule type" value="Genomic_DNA"/>
</dbReference>
<dbReference type="RefSeq" id="XP_019330695.1">
    <property type="nucleotide sequence ID" value="XM_019475150.1"/>
</dbReference>
<dbReference type="SMR" id="A0A1D8PF11"/>
<dbReference type="FunCoup" id="A0A1D8PF11">
    <property type="interactions" value="1248"/>
</dbReference>
<dbReference type="STRING" id="237561.A0A1D8PF11"/>
<dbReference type="EnsemblFungi" id="C1_11030W_A-T">
    <property type="protein sequence ID" value="C1_11030W_A-T-p1"/>
    <property type="gene ID" value="C1_11030W_A"/>
</dbReference>
<dbReference type="GeneID" id="3644419"/>
<dbReference type="KEGG" id="cal:CAALFM_C111030WA"/>
<dbReference type="CGD" id="CAL0000174842">
    <property type="gene designation" value="RPL82"/>
</dbReference>
<dbReference type="VEuPathDB" id="FungiDB:C1_11030W_A"/>
<dbReference type="eggNOG" id="KOG3166">
    <property type="taxonomic scope" value="Eukaryota"/>
</dbReference>
<dbReference type="InParanoid" id="A0A1D8PF11"/>
<dbReference type="OMA" id="RMVKWPA"/>
<dbReference type="OrthoDB" id="29563at2759"/>
<dbReference type="Proteomes" id="UP000000559">
    <property type="component" value="Chromosome 1"/>
</dbReference>
<dbReference type="GO" id="GO:0022625">
    <property type="term" value="C:cytosolic large ribosomal subunit"/>
    <property type="evidence" value="ECO:0000318"/>
    <property type="project" value="GO_Central"/>
</dbReference>
<dbReference type="GO" id="GO:0003723">
    <property type="term" value="F:RNA binding"/>
    <property type="evidence" value="ECO:0000318"/>
    <property type="project" value="GO_Central"/>
</dbReference>
<dbReference type="GO" id="GO:0000470">
    <property type="term" value="P:maturation of LSU-rRNA"/>
    <property type="evidence" value="ECO:0000318"/>
    <property type="project" value="GO_Central"/>
</dbReference>
<dbReference type="FunFam" id="3.30.1330.30:FF:000003">
    <property type="entry name" value="60S ribosomal protein L7a"/>
    <property type="match status" value="1"/>
</dbReference>
<dbReference type="Gene3D" id="3.30.1330.30">
    <property type="match status" value="1"/>
</dbReference>
<dbReference type="InterPro" id="IPR050257">
    <property type="entry name" value="eL8/uL1-like"/>
</dbReference>
<dbReference type="InterPro" id="IPR029064">
    <property type="entry name" value="Ribosomal_eL30-like_sf"/>
</dbReference>
<dbReference type="InterPro" id="IPR004037">
    <property type="entry name" value="Ribosomal_eL8-like_CS"/>
</dbReference>
<dbReference type="InterPro" id="IPR004038">
    <property type="entry name" value="Ribosomal_eL8/eL30/eS12/Gad45"/>
</dbReference>
<dbReference type="InterPro" id="IPR018492">
    <property type="entry name" value="Ribosomal_eL8/Nhp2"/>
</dbReference>
<dbReference type="InterPro" id="IPR001921">
    <property type="entry name" value="Ribosomal_eL8_euk"/>
</dbReference>
<dbReference type="PANTHER" id="PTHR23105">
    <property type="entry name" value="RIBOSOMAL PROTEIN L7AE FAMILY MEMBER"/>
    <property type="match status" value="1"/>
</dbReference>
<dbReference type="Pfam" id="PF01248">
    <property type="entry name" value="Ribosomal_L7Ae"/>
    <property type="match status" value="1"/>
</dbReference>
<dbReference type="PRINTS" id="PR00881">
    <property type="entry name" value="L7ARS6FAMILY"/>
</dbReference>
<dbReference type="PRINTS" id="PR00882">
    <property type="entry name" value="RIBOSOMALL7A"/>
</dbReference>
<dbReference type="SUPFAM" id="SSF55315">
    <property type="entry name" value="L30e-like"/>
    <property type="match status" value="1"/>
</dbReference>
<dbReference type="PROSITE" id="PS01082">
    <property type="entry name" value="RIBOSOMAL_L7AE"/>
    <property type="match status" value="1"/>
</dbReference>
<evidence type="ECO:0000250" key="1">
    <source>
        <dbReference type="UniProtKB" id="Q5ANA1"/>
    </source>
</evidence>
<evidence type="ECO:0000256" key="2">
    <source>
        <dbReference type="SAM" id="MobiDB-lite"/>
    </source>
</evidence>
<evidence type="ECO:0000305" key="3"/>
<proteinExistence type="inferred from homology"/>
<name>RL8A_CANAL</name>
<sequence>MPSSKKVAPAPLATKSKASTSTKNPLFESTPKNFGIGQSIQPKRNLSRFVKWPEYVRLQRQKKILSLRLKVPPSIAQFSQTLDKNTAAQAFKLLNKYRPETSAEKKERLTKEAAAIAEGKTAKDVSPKPVVVKYGLNHVVSLIENKKAKLVLIANDVDPIELVVFLPALCKKMGVPYAIVKGKARLGTLVHKKTSAVAALTEVNSADEAELSKLVSTINANYIEKYEENRKHWGGGIMGSKANDKIAKKAKAAAAAVSTA</sequence>
<accession>A0A1D8PF11</accession>
<comment type="function">
    <text evidence="1">Component of the ribosome, a large ribonucleoprotein complex responsible for the synthesis of proteins in the cell. The small ribosomal subunit (SSU) binds messenger RNAs (mRNAs) and translates the encoded message by selecting cognate aminoacyl-transfer RNA (tRNA) molecules. The large subunit (LSU) contains the ribosomal catalytic site termed the peptidyl transferase center (PTC), which catalyzes the formation of peptide bonds, thereby polymerizing the amino acids delivered by tRNAs into a polypeptide chain. The nascent polypeptides leave the ribosome through a tunnel in the LSU and interact with protein factors that function in enzymatic processing, targeting, and the membrane insertion of nascent chains at the exit of the ribosomal tunnel.</text>
</comment>
<comment type="subunit">
    <text evidence="1">Component of the large ribosomal subunit (By similarity). Mature ribosomes consist of a small (40S) and a large (60S) subunit (By similarity). The 40S subunit contains about 32 different proteins and 1 molecule of RNA (18S) (By similarity). The 60S subunit contains 45 different proteins and 3 molecules of RNA (25S, 5.8S and 5S) (By similarity).</text>
</comment>
<comment type="subcellular location">
    <subcellularLocation>
        <location evidence="1">Cytoplasm</location>
    </subcellularLocation>
</comment>
<comment type="similarity">
    <text evidence="3">Belongs to the eukaryotic ribosomal protein eL8 family.</text>
</comment>
<feature type="chain" id="PRO_0000456493" description="Large ribosomal subunit protein eL8A">
    <location>
        <begin position="1"/>
        <end position="260"/>
    </location>
</feature>
<feature type="region of interest" description="Disordered" evidence="2">
    <location>
        <begin position="1"/>
        <end position="34"/>
    </location>
</feature>
<organism>
    <name type="scientific">Candida albicans (strain SC5314 / ATCC MYA-2876)</name>
    <name type="common">Yeast</name>
    <dbReference type="NCBI Taxonomy" id="237561"/>
    <lineage>
        <taxon>Eukaryota</taxon>
        <taxon>Fungi</taxon>
        <taxon>Dikarya</taxon>
        <taxon>Ascomycota</taxon>
        <taxon>Saccharomycotina</taxon>
        <taxon>Pichiomycetes</taxon>
        <taxon>Debaryomycetaceae</taxon>
        <taxon>Candida/Lodderomyces clade</taxon>
        <taxon>Candida</taxon>
    </lineage>
</organism>
<keyword id="KW-0963">Cytoplasm</keyword>
<keyword id="KW-1185">Reference proteome</keyword>
<keyword id="KW-0687">Ribonucleoprotein</keyword>
<keyword id="KW-0689">Ribosomal protein</keyword>